<sequence length="279" mass="30481">MTRPLSYFHLHLISDATGETLLAAGRAAAAQYANARAIEHIYPLIRTEKQLRKVLEGIDAEPGIVLYTVVDQKLAAIIDESCADMGVPSVSVLEPVLNTFQSYLGAPAHRRASAQHVLNADYFRRIDALNFMMEHDDGQLPLDIEEADVIIVGISRTSKTPTSIYLANRGIKAANVPLVLGIPVPEILFAAKRPLIVGLVATAERISQIRQNRPLGNIPSLDTGLYTDRVSISEELAYARNLCNRHGWPIIDVSRRSIEETAAAILALLRNGKKEGSSS</sequence>
<gene>
    <name type="ordered locus">BS1330_I2061</name>
    <name type="ordered locus">BR2067</name>
</gene>
<protein>
    <recommendedName>
        <fullName evidence="1">Putative pyruvate, phosphate dikinase regulatory protein</fullName>
        <shortName evidence="1">PPDK regulatory protein</shortName>
        <ecNumber evidence="1">2.7.11.32</ecNumber>
        <ecNumber evidence="1">2.7.4.27</ecNumber>
    </recommendedName>
</protein>
<name>PDRP_BRUSU</name>
<reference key="1">
    <citation type="journal article" date="2002" name="Proc. Natl. Acad. Sci. U.S.A.">
        <title>The Brucella suis genome reveals fundamental similarities between animal and plant pathogens and symbionts.</title>
        <authorList>
            <person name="Paulsen I.T."/>
            <person name="Seshadri R."/>
            <person name="Nelson K.E."/>
            <person name="Eisen J.A."/>
            <person name="Heidelberg J.F."/>
            <person name="Read T.D."/>
            <person name="Dodson R.J."/>
            <person name="Umayam L.A."/>
            <person name="Brinkac L.M."/>
            <person name="Beanan M.J."/>
            <person name="Daugherty S.C."/>
            <person name="DeBoy R.T."/>
            <person name="Durkin A.S."/>
            <person name="Kolonay J.F."/>
            <person name="Madupu R."/>
            <person name="Nelson W.C."/>
            <person name="Ayodeji B."/>
            <person name="Kraul M."/>
            <person name="Shetty J."/>
            <person name="Malek J.A."/>
            <person name="Van Aken S.E."/>
            <person name="Riedmuller S."/>
            <person name="Tettelin H."/>
            <person name="Gill S.R."/>
            <person name="White O."/>
            <person name="Salzberg S.L."/>
            <person name="Hoover D.L."/>
            <person name="Lindler L.E."/>
            <person name="Halling S.M."/>
            <person name="Boyle S.M."/>
            <person name="Fraser C.M."/>
        </authorList>
    </citation>
    <scope>NUCLEOTIDE SEQUENCE [LARGE SCALE GENOMIC DNA]</scope>
    <source>
        <strain>1330</strain>
    </source>
</reference>
<reference key="2">
    <citation type="journal article" date="2011" name="J. Bacteriol.">
        <title>Revised genome sequence of Brucella suis 1330.</title>
        <authorList>
            <person name="Tae H."/>
            <person name="Shallom S."/>
            <person name="Settlage R."/>
            <person name="Preston D."/>
            <person name="Adams L.G."/>
            <person name="Garner H.R."/>
        </authorList>
    </citation>
    <scope>NUCLEOTIDE SEQUENCE [LARGE SCALE GENOMIC DNA]</scope>
    <source>
        <strain>1330</strain>
    </source>
</reference>
<accession>P67194</accession>
<accession>G0K915</accession>
<accession>Q8FY23</accession>
<accession>Q8YE18</accession>
<comment type="function">
    <text evidence="1">Bifunctional serine/threonine kinase and phosphorylase involved in the regulation of the pyruvate, phosphate dikinase (PPDK) by catalyzing its phosphorylation/dephosphorylation.</text>
</comment>
<comment type="catalytic activity">
    <reaction evidence="1">
        <text>N(tele)-phospho-L-histidyl/L-threonyl-[pyruvate, phosphate dikinase] + ADP = N(tele)-phospho-L-histidyl/O-phospho-L-threonyl-[pyruvate, phosphate dikinase] + AMP + H(+)</text>
        <dbReference type="Rhea" id="RHEA:43692"/>
        <dbReference type="Rhea" id="RHEA-COMP:10650"/>
        <dbReference type="Rhea" id="RHEA-COMP:10651"/>
        <dbReference type="ChEBI" id="CHEBI:15378"/>
        <dbReference type="ChEBI" id="CHEBI:30013"/>
        <dbReference type="ChEBI" id="CHEBI:61977"/>
        <dbReference type="ChEBI" id="CHEBI:83586"/>
        <dbReference type="ChEBI" id="CHEBI:456215"/>
        <dbReference type="ChEBI" id="CHEBI:456216"/>
        <dbReference type="EC" id="2.7.11.32"/>
    </reaction>
</comment>
<comment type="catalytic activity">
    <reaction evidence="1">
        <text>N(tele)-phospho-L-histidyl/O-phospho-L-threonyl-[pyruvate, phosphate dikinase] + phosphate + H(+) = N(tele)-phospho-L-histidyl/L-threonyl-[pyruvate, phosphate dikinase] + diphosphate</text>
        <dbReference type="Rhea" id="RHEA:43696"/>
        <dbReference type="Rhea" id="RHEA-COMP:10650"/>
        <dbReference type="Rhea" id="RHEA-COMP:10651"/>
        <dbReference type="ChEBI" id="CHEBI:15378"/>
        <dbReference type="ChEBI" id="CHEBI:30013"/>
        <dbReference type="ChEBI" id="CHEBI:33019"/>
        <dbReference type="ChEBI" id="CHEBI:43474"/>
        <dbReference type="ChEBI" id="CHEBI:61977"/>
        <dbReference type="ChEBI" id="CHEBI:83586"/>
        <dbReference type="EC" id="2.7.4.27"/>
    </reaction>
</comment>
<comment type="similarity">
    <text evidence="1">Belongs to the pyruvate, phosphate/water dikinase regulatory protein family. PDRP subfamily.</text>
</comment>
<organism>
    <name type="scientific">Brucella suis biovar 1 (strain 1330)</name>
    <dbReference type="NCBI Taxonomy" id="204722"/>
    <lineage>
        <taxon>Bacteria</taxon>
        <taxon>Pseudomonadati</taxon>
        <taxon>Pseudomonadota</taxon>
        <taxon>Alphaproteobacteria</taxon>
        <taxon>Hyphomicrobiales</taxon>
        <taxon>Brucellaceae</taxon>
        <taxon>Brucella/Ochrobactrum group</taxon>
        <taxon>Brucella</taxon>
    </lineage>
</organism>
<feature type="chain" id="PRO_0000196640" description="Putative pyruvate, phosphate dikinase regulatory protein">
    <location>
        <begin position="1"/>
        <end position="279"/>
    </location>
</feature>
<feature type="binding site" evidence="1">
    <location>
        <begin position="153"/>
        <end position="160"/>
    </location>
    <ligand>
        <name>ADP</name>
        <dbReference type="ChEBI" id="CHEBI:456216"/>
    </ligand>
</feature>
<dbReference type="EC" id="2.7.11.32" evidence="1"/>
<dbReference type="EC" id="2.7.4.27" evidence="1"/>
<dbReference type="EMBL" id="AE014291">
    <property type="protein sequence ID" value="AAN30957.1"/>
    <property type="molecule type" value="Genomic_DNA"/>
</dbReference>
<dbReference type="EMBL" id="CP002997">
    <property type="protein sequence ID" value="AEM19374.1"/>
    <property type="molecule type" value="Genomic_DNA"/>
</dbReference>
<dbReference type="RefSeq" id="WP_002965131.1">
    <property type="nucleotide sequence ID" value="NZ_KN046804.1"/>
</dbReference>
<dbReference type="SMR" id="P67194"/>
<dbReference type="KEGG" id="bms:BR2067"/>
<dbReference type="KEGG" id="bsi:BS1330_I2061"/>
<dbReference type="PATRIC" id="fig|204722.22.peg.1948"/>
<dbReference type="HOGENOM" id="CLU_046206_2_0_5"/>
<dbReference type="PhylomeDB" id="P67194"/>
<dbReference type="Proteomes" id="UP000007104">
    <property type="component" value="Chromosome I"/>
</dbReference>
<dbReference type="GO" id="GO:0043531">
    <property type="term" value="F:ADP binding"/>
    <property type="evidence" value="ECO:0007669"/>
    <property type="project" value="UniProtKB-UniRule"/>
</dbReference>
<dbReference type="GO" id="GO:0005524">
    <property type="term" value="F:ATP binding"/>
    <property type="evidence" value="ECO:0007669"/>
    <property type="project" value="InterPro"/>
</dbReference>
<dbReference type="GO" id="GO:0016776">
    <property type="term" value="F:phosphotransferase activity, phosphate group as acceptor"/>
    <property type="evidence" value="ECO:0007669"/>
    <property type="project" value="UniProtKB-UniRule"/>
</dbReference>
<dbReference type="GO" id="GO:0004674">
    <property type="term" value="F:protein serine/threonine kinase activity"/>
    <property type="evidence" value="ECO:0007669"/>
    <property type="project" value="UniProtKB-UniRule"/>
</dbReference>
<dbReference type="HAMAP" id="MF_00921">
    <property type="entry name" value="PDRP"/>
    <property type="match status" value="1"/>
</dbReference>
<dbReference type="InterPro" id="IPR005177">
    <property type="entry name" value="Kinase-pyrophosphorylase"/>
</dbReference>
<dbReference type="InterPro" id="IPR026565">
    <property type="entry name" value="PPDK_reg"/>
</dbReference>
<dbReference type="NCBIfam" id="NF003742">
    <property type="entry name" value="PRK05339.1"/>
    <property type="match status" value="1"/>
</dbReference>
<dbReference type="PANTHER" id="PTHR31756">
    <property type="entry name" value="PYRUVATE, PHOSPHATE DIKINASE REGULATORY PROTEIN 1, CHLOROPLASTIC"/>
    <property type="match status" value="1"/>
</dbReference>
<dbReference type="PANTHER" id="PTHR31756:SF3">
    <property type="entry name" value="PYRUVATE, PHOSPHATE DIKINASE REGULATORY PROTEIN 1, CHLOROPLASTIC"/>
    <property type="match status" value="1"/>
</dbReference>
<dbReference type="Pfam" id="PF03618">
    <property type="entry name" value="Kinase-PPPase"/>
    <property type="match status" value="1"/>
</dbReference>
<evidence type="ECO:0000255" key="1">
    <source>
        <dbReference type="HAMAP-Rule" id="MF_00921"/>
    </source>
</evidence>
<proteinExistence type="inferred from homology"/>
<keyword id="KW-0418">Kinase</keyword>
<keyword id="KW-0547">Nucleotide-binding</keyword>
<keyword id="KW-0723">Serine/threonine-protein kinase</keyword>
<keyword id="KW-0808">Transferase</keyword>